<reference key="1">
    <citation type="journal article" date="2008" name="Mol. Phylogenet. Evol.">
        <title>Phylogenetic and evolutionary analyses of St. Louis encephalitis virus genomes.</title>
        <authorList>
            <person name="Baillie G.J."/>
            <person name="Kolokotronis S.O."/>
            <person name="Waltari E."/>
            <person name="Maffei J.G."/>
            <person name="Kramer L.D."/>
            <person name="Perkins S.L."/>
        </authorList>
    </citation>
    <scope>NUCLEOTIDE SEQUENCE [GENOMIC RNA]</scope>
</reference>
<reference key="2">
    <citation type="journal article" date="1987" name="Virology">
        <title>Partial nucleotide sequence of St. Louis encephalitis virus RNA: structural proteins, NS1, NS2A, and NS2B.</title>
        <authorList>
            <person name="Trent D.W."/>
            <person name="Kinney R.M."/>
            <person name="Johnson B.J.B."/>
            <person name="Vorndam A.V."/>
            <person name="Grant J.A."/>
            <person name="Deubel V."/>
            <person name="Rice C.M."/>
            <person name="Hahn C."/>
        </authorList>
    </citation>
    <scope>NUCLEOTIDE SEQUENCE [GENOMIC RNA] OF 1-1525</scope>
</reference>
<keyword id="KW-0002">3D-structure</keyword>
<keyword id="KW-0067">ATP-binding</keyword>
<keyword id="KW-0167">Capsid protein</keyword>
<keyword id="KW-1165">Clathrin-mediated endocytosis of virus by host</keyword>
<keyword id="KW-0165">Cleavage on pair of basic residues</keyword>
<keyword id="KW-1015">Disulfide bond</keyword>
<keyword id="KW-1170">Fusion of virus membrane with host endosomal membrane</keyword>
<keyword id="KW-1168">Fusion of virus membrane with host membrane</keyword>
<keyword id="KW-0325">Glycoprotein</keyword>
<keyword id="KW-0347">Helicase</keyword>
<keyword id="KW-1035">Host cytoplasm</keyword>
<keyword id="KW-1038">Host endoplasmic reticulum</keyword>
<keyword id="KW-1043">Host membrane</keyword>
<keyword id="KW-1048">Host nucleus</keyword>
<keyword id="KW-0945">Host-virus interaction</keyword>
<keyword id="KW-0378">Hydrolase</keyword>
<keyword id="KW-1090">Inhibition of host innate immune response by virus</keyword>
<keyword id="KW-1114">Inhibition of host interferon signaling pathway by virus</keyword>
<keyword id="KW-1105">Inhibition of host STAT1 by virus</keyword>
<keyword id="KW-1106">Inhibition of host STAT2 by virus</keyword>
<keyword id="KW-0922">Interferon antiviral system evasion</keyword>
<keyword id="KW-0472">Membrane</keyword>
<keyword id="KW-0479">Metal-binding</keyword>
<keyword id="KW-0489">Methyltransferase</keyword>
<keyword id="KW-0506">mRNA capping</keyword>
<keyword id="KW-0507">mRNA processing</keyword>
<keyword id="KW-0511">Multifunctional enzyme</keyword>
<keyword id="KW-0547">Nucleotide-binding</keyword>
<keyword id="KW-0548">Nucleotidyltransferase</keyword>
<keyword id="KW-0597">Phosphoprotein</keyword>
<keyword id="KW-0645">Protease</keyword>
<keyword id="KW-0694">RNA-binding</keyword>
<keyword id="KW-0696">RNA-directed RNA polymerase</keyword>
<keyword id="KW-0949">S-adenosyl-L-methionine</keyword>
<keyword id="KW-0964">Secreted</keyword>
<keyword id="KW-0720">Serine protease</keyword>
<keyword id="KW-0941">Suppressor of RNA silencing</keyword>
<keyword id="KW-0804">Transcription</keyword>
<keyword id="KW-0805">Transcription regulation</keyword>
<keyword id="KW-0808">Transferase</keyword>
<keyword id="KW-0812">Transmembrane</keyword>
<keyword id="KW-1133">Transmembrane helix</keyword>
<keyword id="KW-1161">Viral attachment to host cell</keyword>
<keyword id="KW-0261">Viral envelope protein</keyword>
<keyword id="KW-0899">Viral immunoevasion</keyword>
<keyword id="KW-1162">Viral penetration into host cytoplasm</keyword>
<keyword id="KW-0693">Viral RNA replication</keyword>
<keyword id="KW-0946">Virion</keyword>
<keyword id="KW-1164">Virus endocytosis by host</keyword>
<keyword id="KW-1160">Virus entry into host cell</keyword>
<keyword id="KW-0862">Zinc</keyword>
<sequence>MSKKPGKPGRNRVVNMLKRGVSRVNPLTGLKRILGSLLDGRGPVRFILAILTFFRFTALQPTEALKRRWRAVDKRTALKHLNGFKRDLGSMLDTINRRPSKKRGGTRSLLGLAALIGLASSLQLSTYQGKVLMSINKTDAQSAINIPSANGANTCIVRALDVGVMCKNDITYLCPVLSAGNDPEDIDCWCDVEEVWVHYGRCTRMGHSRRSRRSISVQHHGDSTLATKNTPWLDTVKTTKYLTKVENWVLRNPGYALVALAIGWMLGSNNTQRVVFVIMLMLIAPAYSFNCLGTSNRDFVEGASGATWIDLVLEGGSCVTVMAPEKPTLDFKVMKMEATELATVREYCYEATLDTLSTVARCPTTGEAHNTKRSDPTFVCKRDVVDRGWGNGCGLFGKGSIDTCAKFTCKNKATGKTILRENIKYEVAIFVHGSTDSTSHGNYFEQIGKNQAARFTISPQAPSFTANMGEYGTVTIDCEARSGINTEDYYVFTVKEKSWLVNRDWFHDLNLPWTSPATTDWRNRETLVEFEEPHATKQTVVALGSQEGALHTALAGAIPATVSSSTLTLQSGHLKCRAKLDKVKIKGTTYGMCDSAFTFSKNPADTGHGTVIVELQYTGSNGPCRVPISVTANLMDLTPVGRLVTVNPFISTGGANNKVMIEVEPPFGDSYIVVGRGTTQINYHWHKEGSSIGKALATTWKGAQRLAVLGDTAWDFGSIGGVFNSIGKAVHQVFGGAFRTLFGGMSWITQGLLGALLLWMGLQARDRSISLTLLAVGGILIFLATSVQADSGCAIDLQRRELKCGGGIFVYNDVEKWKSDYKYFPLTPTGLAHVIQEAHANGICGIRSTSRLEHLMWENIQRELNAIFEDNEIDLSVVVQEDPKYYKRAPRRLKKLEDELDYGWKKWGKTLFVEPRLGNNTFVVDGPETKECPTANRAWNSFKVEDFGFGMVFTRLWLTIREENTTECDSAIIGTAIKGDRAVHSDLSYWIESKKNETWQLERAVMGEVKSCTWPETHTLWGDGVVESEMIIPVTLGGPKSHHNKRNGYHTQTKGPWSEGEITLDFDYCPGTTVTVTEHCGNRGASLRTTTASGKLVTDWCCRSCSLPPLRYTTKDGCWYGMEIRPVKEEEAKLVKSRVTAGVAGGMEPFQLGLLVAFIATQEVLKRRWTGKLTLTSLAVCLALLIFGNLTYMDLVRYLVLVGTAFAEMNTGGDVIHLALVAVFKVQPAFLAGLFLRMQWSNQENILMVIGAAFLQMAANDLKLEVLPILNAMSIAWMLIRAMKEGKVAMYALPILCALTPGMRMAGLDVIRCLLLIIGIVTLLNERRESVAKKKGGYLLAAALCQAGVCSPLIMMGGLILAHPNGKRSWPASEVLTGVGLMCALAGGLLEFEETSMVVPFAIAGLMYITYTVSGKAAEMWIEKAADITWEQNAEITGTSPRLDVDLDSHGNFKLLNDPGAPVHLFALRFILLGLSARFHWFIPFGVLGFWLLGKHSKRGGALWDVPSPKVYPKCETKPGIYRIMTRGILGTFQAGVGVMHEGVFHTMWHATEGAVLRNGEGRLDPYAGDVRNDLISYGGPWKLSATWDGTEEVQMIAVAPGKPAINVQTTPGVFKTPFGTIGAVTLDFPKGTSGSPIINKKGEIIGLYGNGVLIGQGEYVSGIIQGERTEEPIPDAYNEEMLRKRKLTVLELHPGAGKTRKVLPQIIKDCIQKRLRTAVLAPTRVVACEIAEALKGLPIRYLTPAVRNEHQGNEIVDVMCHATLTQKLLTPTRVPNYQVYIMDEAHFIDPASIAARGYISTKVELGEAAAIFMTATPPGTNDPFPDSNSPILDVEAQVPDKAWSTGYEWITNFTGRTVWFVPSVKSGNEIAICLQKAGKRVIQLNRKSFDTEYPKTKNNEWDFVVTTDISEMGANFGAHRVIDSRKCVKPVILEDDDRVILNGPMAITSASAAQRRGRIGRNPSQIGDEYHYGGATNEDDHDLANWTEAKILLDNIYLPNGLVAQMYQPERDKVFTMDGEFRLRGEERKNFVELMRNGDLPVWLAYKVASNGHSYQDRSWCFTGQTNNTILEDNNEVEVFTKTGDRKILRPKWMDARVCCDYQALKSFKEFAAGKRSALGMMEVMGRMPNHFWEKTVAAADTLYLLGTSEANSRAHKEALAELPDSLETLLLIGMLCVMSMGTFIFLMNRKGVGKMGLGAFVMTLATALLWAAEVPGTQIAGVLLIVFLLMIVLIPEPEKQRSQTDNQLAVFLICIMTLMGVVAANEMGLLEKTKSDIAKLFGSQPGSVGFATRTTPWDISLDIKPATAWALYAAATMVMTPLIKHLITTQYVNFSLTAIASQAGVLLGLTNGMPFTAMDLSVPLLVLGCWNQMTLPSLAVAVMLLAIHYAFMIPGWQAEAMRAAQRRTAAGIMKNAVVDGIVATDIPDLSPATPMTEKKMGQILLIAAAVLAVLVRPGICSIKEFGVLGSAALVTLIEGTAGVVWNCTTAVGLCNLMRGGWLAGMSITWTVYKNVDKPKGKRGGGKGATLGEIWKSRLNQLTRAEFMAYRKDGIVEVDRAPARKARREGRLTGGHPVSRGSAKLRWITERGFVKPMGKVVDLGCGRGGWSYYCATLKHVQEVKGFTKGGPGHEEPQLMQSYGWNLVHMKSGVDVFHKPAEPADTVLCDIGESNPSCEVEEARTARVLDMVEEWLKKGATEFCIKVLCPYTPKIIEKLEKLQRKYGGGLVRVPLSRNSTHEMYWVSGAAGNIIHAVSMTSQVLMGRMDKQNRSGPRYEEDVNLGSGTRSVGKLTEKPDLRKVGERIRRLREEYQQTWTYDHNNPYRTWNYHGSYEVKPTGSASSMVNGVVRLLSKPWDMITNVTTMAMTDTTPFGQQRVFKEKVDTKAPEPPLGVAQIMDVTTDWLWDFVAREKKPRVCTPEEFKAKVNSHAALGAMFEEQNQWSSAREAVEDPKFWEMVDEEREAHLKGECHTCIYNMMGKREKKTGEFGKAKGSRAIWYMWLGARFLEFEALGFLNEDHWMSRENSYGGVEGKGLQKLGYILQEISQIPGGKMYADDTAGWDTRITKEDLKNEAKITKRMEERHRKLAEAIIDLTYRHKVVKVMRPGPDGKTYMDVISREDQRGSGQVVTYALNTFTNLAVQLIRCMEAEGVVDEDDITRVRLGRLAKAVEWLRKNGPERLSRMAVSGDDCVVKPIDDRFATALHFLNNMSKIRKDIQEWKPSTGWHNWQEVPFCSHHFNELMLKDGRTIVVPCRSQDELIGRARISPGAGWNVKETACLSKSYAQMWLLMYFHRRDLRMMANAICSAVPVNWVPTGRTTWSIHGKGEWMTTEDMLSVWNRVWIEENEYMKDKTPLAAWNDIPYLGKREDIWCGSLIGTRTRATWAENIYAPIMQIRNLIGEEEYRDYM</sequence>
<dbReference type="EC" id="3.4.21.91"/>
<dbReference type="EC" id="3.6.1.15"/>
<dbReference type="EC" id="3.6.4.13"/>
<dbReference type="EC" id="2.1.1.56" evidence="17"/>
<dbReference type="EC" id="2.1.1.57" evidence="17"/>
<dbReference type="EC" id="2.7.7.48" evidence="12"/>
<dbReference type="EMBL" id="EF158050">
    <property type="protein sequence ID" value="ABN11812.1"/>
    <property type="molecule type" value="Genomic_RNA"/>
</dbReference>
<dbReference type="EMBL" id="M16614">
    <property type="protein sequence ID" value="AAA47786.1"/>
    <property type="molecule type" value="Genomic_RNA"/>
</dbReference>
<dbReference type="PDB" id="4FG0">
    <property type="method" value="X-ray"/>
    <property type="resolution" value="3.90 A"/>
    <property type="chains" value="A=289-695"/>
</dbReference>
<dbReference type="PDB" id="7XT0">
    <property type="method" value="X-ray"/>
    <property type="resolution" value="2.48 A"/>
    <property type="chains" value="A=1676-2117"/>
</dbReference>
<dbReference type="PDBsum" id="4FG0"/>
<dbReference type="PDBsum" id="7XT0"/>
<dbReference type="BMRB" id="P09732"/>
<dbReference type="SMR" id="P09732"/>
<dbReference type="MEROPS" id="S07.003"/>
<dbReference type="ABCD" id="P09732">
    <property type="antibodies" value="1 sequenced antibody"/>
</dbReference>
<dbReference type="EvolutionaryTrace" id="P09732"/>
<dbReference type="GO" id="GO:0005576">
    <property type="term" value="C:extracellular region"/>
    <property type="evidence" value="ECO:0007669"/>
    <property type="project" value="UniProtKB-SubCell"/>
</dbReference>
<dbReference type="GO" id="GO:0044167">
    <property type="term" value="C:host cell endoplasmic reticulum membrane"/>
    <property type="evidence" value="ECO:0007669"/>
    <property type="project" value="UniProtKB-SubCell"/>
</dbReference>
<dbReference type="GO" id="GO:0042025">
    <property type="term" value="C:host cell nucleus"/>
    <property type="evidence" value="ECO:0007669"/>
    <property type="project" value="UniProtKB-SubCell"/>
</dbReference>
<dbReference type="GO" id="GO:0044220">
    <property type="term" value="C:host cell perinuclear region of cytoplasm"/>
    <property type="evidence" value="ECO:0007669"/>
    <property type="project" value="UniProtKB-SubCell"/>
</dbReference>
<dbReference type="GO" id="GO:0016020">
    <property type="term" value="C:membrane"/>
    <property type="evidence" value="ECO:0007669"/>
    <property type="project" value="UniProtKB-KW"/>
</dbReference>
<dbReference type="GO" id="GO:0019028">
    <property type="term" value="C:viral capsid"/>
    <property type="evidence" value="ECO:0007669"/>
    <property type="project" value="UniProtKB-KW"/>
</dbReference>
<dbReference type="GO" id="GO:0019031">
    <property type="term" value="C:viral envelope"/>
    <property type="evidence" value="ECO:0007669"/>
    <property type="project" value="UniProtKB-KW"/>
</dbReference>
<dbReference type="GO" id="GO:0055036">
    <property type="term" value="C:virion membrane"/>
    <property type="evidence" value="ECO:0007669"/>
    <property type="project" value="UniProtKB-SubCell"/>
</dbReference>
<dbReference type="GO" id="GO:0005524">
    <property type="term" value="F:ATP binding"/>
    <property type="evidence" value="ECO:0007669"/>
    <property type="project" value="UniProtKB-KW"/>
</dbReference>
<dbReference type="GO" id="GO:0016887">
    <property type="term" value="F:ATP hydrolysis activity"/>
    <property type="evidence" value="ECO:0007669"/>
    <property type="project" value="RHEA"/>
</dbReference>
<dbReference type="GO" id="GO:0003725">
    <property type="term" value="F:double-stranded RNA binding"/>
    <property type="evidence" value="ECO:0007669"/>
    <property type="project" value="InterPro"/>
</dbReference>
<dbReference type="GO" id="GO:0046872">
    <property type="term" value="F:metal ion binding"/>
    <property type="evidence" value="ECO:0007669"/>
    <property type="project" value="UniProtKB-KW"/>
</dbReference>
<dbReference type="GO" id="GO:0004483">
    <property type="term" value="F:mRNA (nucleoside-2'-O-)-methyltransferase activity"/>
    <property type="evidence" value="ECO:0007669"/>
    <property type="project" value="UniProtKB-EC"/>
</dbReference>
<dbReference type="GO" id="GO:0004482">
    <property type="term" value="F:mRNA 5'-cap (guanine-N7-)-methyltransferase activity"/>
    <property type="evidence" value="ECO:0007669"/>
    <property type="project" value="UniProtKB-EC"/>
</dbReference>
<dbReference type="GO" id="GO:0046983">
    <property type="term" value="F:protein dimerization activity"/>
    <property type="evidence" value="ECO:0007669"/>
    <property type="project" value="InterPro"/>
</dbReference>
<dbReference type="GO" id="GO:0003724">
    <property type="term" value="F:RNA helicase activity"/>
    <property type="evidence" value="ECO:0007669"/>
    <property type="project" value="UniProtKB-EC"/>
</dbReference>
<dbReference type="GO" id="GO:0003968">
    <property type="term" value="F:RNA-directed RNA polymerase activity"/>
    <property type="evidence" value="ECO:0007669"/>
    <property type="project" value="UniProtKB-KW"/>
</dbReference>
<dbReference type="GO" id="GO:0004252">
    <property type="term" value="F:serine-type endopeptidase activity"/>
    <property type="evidence" value="ECO:0007669"/>
    <property type="project" value="InterPro"/>
</dbReference>
<dbReference type="GO" id="GO:0005198">
    <property type="term" value="F:structural molecule activity"/>
    <property type="evidence" value="ECO:0007669"/>
    <property type="project" value="InterPro"/>
</dbReference>
<dbReference type="GO" id="GO:0075512">
    <property type="term" value="P:clathrin-dependent endocytosis of virus by host cell"/>
    <property type="evidence" value="ECO:0007669"/>
    <property type="project" value="UniProtKB-KW"/>
</dbReference>
<dbReference type="GO" id="GO:0039654">
    <property type="term" value="P:fusion of virus membrane with host endosome membrane"/>
    <property type="evidence" value="ECO:0007669"/>
    <property type="project" value="UniProtKB-KW"/>
</dbReference>
<dbReference type="GO" id="GO:0006508">
    <property type="term" value="P:proteolysis"/>
    <property type="evidence" value="ECO:0007669"/>
    <property type="project" value="UniProtKB-KW"/>
</dbReference>
<dbReference type="GO" id="GO:0052170">
    <property type="term" value="P:symbiont-mediated suppression of host innate immune response"/>
    <property type="evidence" value="ECO:0007669"/>
    <property type="project" value="UniProtKB-KW"/>
</dbReference>
<dbReference type="GO" id="GO:0039563">
    <property type="term" value="P:symbiont-mediated suppression of host JAK-STAT cascade via inhibition of STAT1 activity"/>
    <property type="evidence" value="ECO:0007669"/>
    <property type="project" value="UniProtKB-KW"/>
</dbReference>
<dbReference type="GO" id="GO:0039564">
    <property type="term" value="P:symbiont-mediated suppression of host JAK-STAT cascade via inhibition of STAT2 activity"/>
    <property type="evidence" value="ECO:0007669"/>
    <property type="project" value="UniProtKB-KW"/>
</dbReference>
<dbReference type="GO" id="GO:0039502">
    <property type="term" value="P:symbiont-mediated suppression of host type I interferon-mediated signaling pathway"/>
    <property type="evidence" value="ECO:0007669"/>
    <property type="project" value="UniProtKB-KW"/>
</dbReference>
<dbReference type="GO" id="GO:0039694">
    <property type="term" value="P:viral RNA genome replication"/>
    <property type="evidence" value="ECO:0007669"/>
    <property type="project" value="InterPro"/>
</dbReference>
<dbReference type="GO" id="GO:0019062">
    <property type="term" value="P:virion attachment to host cell"/>
    <property type="evidence" value="ECO:0007669"/>
    <property type="project" value="UniProtKB-KW"/>
</dbReference>
<dbReference type="CDD" id="cd20761">
    <property type="entry name" value="capping_2-OMTase_Flaviviridae"/>
    <property type="match status" value="1"/>
</dbReference>
<dbReference type="CDD" id="cd17931">
    <property type="entry name" value="DEXHc_viral_Ns3"/>
    <property type="match status" value="1"/>
</dbReference>
<dbReference type="CDD" id="cd12149">
    <property type="entry name" value="Flavi_E_C"/>
    <property type="match status" value="1"/>
</dbReference>
<dbReference type="CDD" id="cd17038">
    <property type="entry name" value="Flavi_M"/>
    <property type="match status" value="1"/>
</dbReference>
<dbReference type="CDD" id="cd23204">
    <property type="entry name" value="Flavivirus_RdRp"/>
    <property type="match status" value="1"/>
</dbReference>
<dbReference type="CDD" id="cd18806">
    <property type="entry name" value="SF2_C_viral"/>
    <property type="match status" value="1"/>
</dbReference>
<dbReference type="FunFam" id="1.20.1280.260:FF:000001">
    <property type="entry name" value="Envelope glycoprotein"/>
    <property type="match status" value="1"/>
</dbReference>
<dbReference type="FunFam" id="2.60.40.350:FF:000001">
    <property type="entry name" value="Envelope glycoprotein"/>
    <property type="match status" value="1"/>
</dbReference>
<dbReference type="FunFam" id="1.10.260.90:FF:000001">
    <property type="entry name" value="Genome polyprotein"/>
    <property type="match status" value="1"/>
</dbReference>
<dbReference type="FunFam" id="2.60.260.50:FF:000001">
    <property type="entry name" value="Genome polyprotein"/>
    <property type="match status" value="1"/>
</dbReference>
<dbReference type="FunFam" id="3.30.70.2840:FF:000001">
    <property type="entry name" value="Genome polyprotein"/>
    <property type="match status" value="1"/>
</dbReference>
<dbReference type="FunFam" id="3.30.70.2840:FF:000002">
    <property type="entry name" value="Genome polyprotein"/>
    <property type="match status" value="1"/>
</dbReference>
<dbReference type="FunFam" id="3.40.50.150:FF:000105">
    <property type="entry name" value="Genome polyprotein"/>
    <property type="match status" value="1"/>
</dbReference>
<dbReference type="FunFam" id="3.40.50.300:FF:000763">
    <property type="entry name" value="Genome polyprotein"/>
    <property type="match status" value="1"/>
</dbReference>
<dbReference type="Gene3D" id="1.10.10.930">
    <property type="match status" value="1"/>
</dbReference>
<dbReference type="Gene3D" id="1.10.260.90">
    <property type="match status" value="1"/>
</dbReference>
<dbReference type="Gene3D" id="1.20.1280.260">
    <property type="match status" value="1"/>
</dbReference>
<dbReference type="Gene3D" id="2.40.10.120">
    <property type="match status" value="2"/>
</dbReference>
<dbReference type="Gene3D" id="2.60.40.350">
    <property type="match status" value="1"/>
</dbReference>
<dbReference type="Gene3D" id="1.10.8.970">
    <property type="entry name" value="Flavivirus envelope glycoprotein M-like"/>
    <property type="match status" value="1"/>
</dbReference>
<dbReference type="Gene3D" id="2.60.260.50">
    <property type="entry name" value="Flavivirus polyprotein propeptide domain"/>
    <property type="match status" value="1"/>
</dbReference>
<dbReference type="Gene3D" id="3.30.70.2840">
    <property type="entry name" value="Flavivirus RNA-directed RNA polymerase, thumb domain"/>
    <property type="match status" value="3"/>
</dbReference>
<dbReference type="Gene3D" id="3.40.50.300">
    <property type="entry name" value="P-loop containing nucleotide triphosphate hydrolases"/>
    <property type="match status" value="2"/>
</dbReference>
<dbReference type="Gene3D" id="2.60.98.10">
    <property type="entry name" value="Tick-borne Encephalitis virus Glycoprotein, domain 1"/>
    <property type="match status" value="1"/>
</dbReference>
<dbReference type="Gene3D" id="3.40.50.150">
    <property type="entry name" value="Vaccinia Virus protein VP39"/>
    <property type="match status" value="1"/>
</dbReference>
<dbReference type="Gene3D" id="3.30.67.10">
    <property type="entry name" value="Viral Envelope Glycoprotein, domain 2"/>
    <property type="match status" value="1"/>
</dbReference>
<dbReference type="Gene3D" id="3.30.387.10">
    <property type="entry name" value="Viral Envelope Glycoprotein, domain 3"/>
    <property type="match status" value="1"/>
</dbReference>
<dbReference type="InterPro" id="IPR043502">
    <property type="entry name" value="DNA/RNA_pol_sf"/>
</dbReference>
<dbReference type="InterPro" id="IPR000069">
    <property type="entry name" value="Env_glycoprot_M_flavivir"/>
</dbReference>
<dbReference type="InterPro" id="IPR038302">
    <property type="entry name" value="Env_glycoprot_M_sf_flavivir"/>
</dbReference>
<dbReference type="InterPro" id="IPR013755">
    <property type="entry name" value="Flav_gly_cen_dom_subdom1"/>
</dbReference>
<dbReference type="InterPro" id="IPR001122">
    <property type="entry name" value="Flavi_capsidC"/>
</dbReference>
<dbReference type="InterPro" id="IPR037172">
    <property type="entry name" value="Flavi_capsidC_sf"/>
</dbReference>
<dbReference type="InterPro" id="IPR011492">
    <property type="entry name" value="Flavi_DEAD"/>
</dbReference>
<dbReference type="InterPro" id="IPR027287">
    <property type="entry name" value="Flavi_E_Ig-like"/>
</dbReference>
<dbReference type="InterPro" id="IPR026470">
    <property type="entry name" value="Flavi_E_Stem/Anchor_dom"/>
</dbReference>
<dbReference type="InterPro" id="IPR038345">
    <property type="entry name" value="Flavi_E_Stem/Anchor_dom_sf"/>
</dbReference>
<dbReference type="InterPro" id="IPR011998">
    <property type="entry name" value="Flavi_Glycoprot_E_cen/dimer"/>
</dbReference>
<dbReference type="InterPro" id="IPR001157">
    <property type="entry name" value="Flavi_NS1"/>
</dbReference>
<dbReference type="InterPro" id="IPR000752">
    <property type="entry name" value="Flavi_NS2A"/>
</dbReference>
<dbReference type="InterPro" id="IPR000487">
    <property type="entry name" value="Flavi_NS2B"/>
</dbReference>
<dbReference type="InterPro" id="IPR001850">
    <property type="entry name" value="Flavi_NS3_S7"/>
</dbReference>
<dbReference type="InterPro" id="IPR000404">
    <property type="entry name" value="Flavi_NS4A"/>
</dbReference>
<dbReference type="InterPro" id="IPR001528">
    <property type="entry name" value="Flavi_NS4B"/>
</dbReference>
<dbReference type="InterPro" id="IPR046811">
    <property type="entry name" value="Flavi_NS5_thumb"/>
</dbReference>
<dbReference type="InterPro" id="IPR002535">
    <property type="entry name" value="Flavi_propep"/>
</dbReference>
<dbReference type="InterPro" id="IPR038688">
    <property type="entry name" value="Flavi_propep_sf"/>
</dbReference>
<dbReference type="InterPro" id="IPR047530">
    <property type="entry name" value="Flavi_RdRp"/>
</dbReference>
<dbReference type="InterPro" id="IPR000208">
    <property type="entry name" value="Flavi_RdRp_fingers/palm"/>
</dbReference>
<dbReference type="InterPro" id="IPR000336">
    <property type="entry name" value="Flavivir/Alphavir_Ig-like_sf"/>
</dbReference>
<dbReference type="InterPro" id="IPR014412">
    <property type="entry name" value="Gen_Poly_FLV"/>
</dbReference>
<dbReference type="InterPro" id="IPR036253">
    <property type="entry name" value="Glycoprot_cen/dimer_sf"/>
</dbReference>
<dbReference type="InterPro" id="IPR038055">
    <property type="entry name" value="Glycoprot_E_dimer_dom"/>
</dbReference>
<dbReference type="InterPro" id="IPR013756">
    <property type="entry name" value="GlyE_cen_dom_subdom2"/>
</dbReference>
<dbReference type="InterPro" id="IPR014001">
    <property type="entry name" value="Helicase_ATP-bd"/>
</dbReference>
<dbReference type="InterPro" id="IPR001650">
    <property type="entry name" value="Helicase_C-like"/>
</dbReference>
<dbReference type="InterPro" id="IPR014756">
    <property type="entry name" value="Ig_E-set"/>
</dbReference>
<dbReference type="InterPro" id="IPR026490">
    <property type="entry name" value="mRNA_cap_0/1_MeTrfase"/>
</dbReference>
<dbReference type="InterPro" id="IPR049486">
    <property type="entry name" value="NS3-hel_C_flaviviridae"/>
</dbReference>
<dbReference type="InterPro" id="IPR027417">
    <property type="entry name" value="P-loop_NTPase"/>
</dbReference>
<dbReference type="InterPro" id="IPR009003">
    <property type="entry name" value="Peptidase_S1_PA"/>
</dbReference>
<dbReference type="InterPro" id="IPR007094">
    <property type="entry name" value="RNA-dir_pol_PSvirus"/>
</dbReference>
<dbReference type="InterPro" id="IPR002877">
    <property type="entry name" value="RNA_MeTrfase_FtsJ_dom"/>
</dbReference>
<dbReference type="InterPro" id="IPR029063">
    <property type="entry name" value="SAM-dependent_MTases_sf"/>
</dbReference>
<dbReference type="NCBIfam" id="TIGR04240">
    <property type="entry name" value="flavi_E_stem"/>
    <property type="match status" value="1"/>
</dbReference>
<dbReference type="Pfam" id="PF20907">
    <property type="entry name" value="Flav_NS3-hel_C"/>
    <property type="match status" value="1"/>
</dbReference>
<dbReference type="Pfam" id="PF01003">
    <property type="entry name" value="Flavi_capsid"/>
    <property type="match status" value="1"/>
</dbReference>
<dbReference type="Pfam" id="PF07652">
    <property type="entry name" value="Flavi_DEAD"/>
    <property type="match status" value="1"/>
</dbReference>
<dbReference type="Pfam" id="PF21659">
    <property type="entry name" value="Flavi_E_stem"/>
    <property type="match status" value="1"/>
</dbReference>
<dbReference type="Pfam" id="PF02832">
    <property type="entry name" value="Flavi_glycop_C"/>
    <property type="match status" value="1"/>
</dbReference>
<dbReference type="Pfam" id="PF00869">
    <property type="entry name" value="Flavi_glycoprot"/>
    <property type="match status" value="1"/>
</dbReference>
<dbReference type="Pfam" id="PF01004">
    <property type="entry name" value="Flavi_M"/>
    <property type="match status" value="1"/>
</dbReference>
<dbReference type="Pfam" id="PF00948">
    <property type="entry name" value="Flavi_NS1"/>
    <property type="match status" value="1"/>
</dbReference>
<dbReference type="Pfam" id="PF01005">
    <property type="entry name" value="Flavi_NS2A"/>
    <property type="match status" value="1"/>
</dbReference>
<dbReference type="Pfam" id="PF01002">
    <property type="entry name" value="Flavi_NS2B"/>
    <property type="match status" value="1"/>
</dbReference>
<dbReference type="Pfam" id="PF01350">
    <property type="entry name" value="Flavi_NS4A"/>
    <property type="match status" value="1"/>
</dbReference>
<dbReference type="Pfam" id="PF01349">
    <property type="entry name" value="Flavi_NS4B"/>
    <property type="match status" value="1"/>
</dbReference>
<dbReference type="Pfam" id="PF00972">
    <property type="entry name" value="Flavi_NS5"/>
    <property type="match status" value="1"/>
</dbReference>
<dbReference type="Pfam" id="PF20483">
    <property type="entry name" value="Flavi_NS5_thumb"/>
    <property type="match status" value="1"/>
</dbReference>
<dbReference type="Pfam" id="PF01570">
    <property type="entry name" value="Flavi_propep"/>
    <property type="match status" value="1"/>
</dbReference>
<dbReference type="Pfam" id="PF01728">
    <property type="entry name" value="FtsJ"/>
    <property type="match status" value="1"/>
</dbReference>
<dbReference type="Pfam" id="PF00949">
    <property type="entry name" value="Peptidase_S7"/>
    <property type="match status" value="1"/>
</dbReference>
<dbReference type="PIRSF" id="PIRSF003817">
    <property type="entry name" value="Gen_Poly_FLV"/>
    <property type="match status" value="1"/>
</dbReference>
<dbReference type="SMART" id="SM00487">
    <property type="entry name" value="DEXDc"/>
    <property type="match status" value="1"/>
</dbReference>
<dbReference type="SMART" id="SM00490">
    <property type="entry name" value="HELICc"/>
    <property type="match status" value="1"/>
</dbReference>
<dbReference type="SUPFAM" id="SSF56672">
    <property type="entry name" value="DNA/RNA polymerases"/>
    <property type="match status" value="1"/>
</dbReference>
<dbReference type="SUPFAM" id="SSF81296">
    <property type="entry name" value="E set domains"/>
    <property type="match status" value="1"/>
</dbReference>
<dbReference type="SUPFAM" id="SSF101257">
    <property type="entry name" value="Flavivirus capsid protein C"/>
    <property type="match status" value="1"/>
</dbReference>
<dbReference type="SUPFAM" id="SSF52540">
    <property type="entry name" value="P-loop containing nucleoside triphosphate hydrolases"/>
    <property type="match status" value="2"/>
</dbReference>
<dbReference type="SUPFAM" id="SSF53335">
    <property type="entry name" value="S-adenosyl-L-methionine-dependent methyltransferases"/>
    <property type="match status" value="1"/>
</dbReference>
<dbReference type="SUPFAM" id="SSF50494">
    <property type="entry name" value="Trypsin-like serine proteases"/>
    <property type="match status" value="1"/>
</dbReference>
<dbReference type="SUPFAM" id="SSF56983">
    <property type="entry name" value="Viral glycoprotein, central and dimerisation domains"/>
    <property type="match status" value="1"/>
</dbReference>
<dbReference type="PROSITE" id="PS51527">
    <property type="entry name" value="FLAVIVIRUS_NS2B"/>
    <property type="match status" value="1"/>
</dbReference>
<dbReference type="PROSITE" id="PS51528">
    <property type="entry name" value="FLAVIVIRUS_NS3PRO"/>
    <property type="match status" value="1"/>
</dbReference>
<dbReference type="PROSITE" id="PS51192">
    <property type="entry name" value="HELICASE_ATP_BIND_1"/>
    <property type="match status" value="1"/>
</dbReference>
<dbReference type="PROSITE" id="PS51194">
    <property type="entry name" value="HELICASE_CTER"/>
    <property type="match status" value="1"/>
</dbReference>
<dbReference type="PROSITE" id="PS50507">
    <property type="entry name" value="RDRP_SSRNA_POS"/>
    <property type="match status" value="1"/>
</dbReference>
<dbReference type="PROSITE" id="PS51591">
    <property type="entry name" value="RNA_CAP01_NS5_MT"/>
    <property type="match status" value="1"/>
</dbReference>
<comment type="function">
    <molecule>Capsid protein C</molecule>
    <text evidence="7">Plays a role in virus budding by binding to the cell membrane and gathering the viral RNA into a nucleocapsid that forms the core of a mature virus particle. During virus entry, may induce genome penetration into the host cytoplasm after hemifusion induced by the surface proteins. Can migrate to the cell nucleus where it modulates host functions. Overcomes the anti-viral effects of host EXOC1 by sequestering and degrading the latter through the proteasome degradation pathway.</text>
</comment>
<comment type="function">
    <molecule>Capsid protein C</molecule>
    <text evidence="2">Inhibits RNA silencing by interfering with host Dicer.</text>
</comment>
<comment type="function">
    <molecule>Peptide pr</molecule>
    <text evidence="7">Prevents premature fusion activity of envelope proteins in trans-Golgi by binding to envelope protein E at pH6.0. After virion release in extracellular space, gets dissociated from E dimers.</text>
</comment>
<comment type="function">
    <molecule>Protein prM</molecule>
    <text evidence="7">Acts as a chaperone for envelope protein E during intracellular virion assembly by masking and inactivating envelope protein E fusion peptide. prM is the only viral peptide matured by host furin in the trans-Golgi network probably to avoid catastrophic activation of the viral fusion activity in acidic Golgi compartment prior to virion release. prM-E cleavage is inefficient, and many virions are only partially matured. These uncleaved prM would play a role in immune evasion.</text>
</comment>
<comment type="function">
    <molecule>Small envelope protein M</molecule>
    <text evidence="7">May play a role in virus budding. Exerts cytotoxic effects by activating a mitochondrial apoptotic pathway through M ectodomain. May display a viroporin activity.</text>
</comment>
<comment type="function">
    <molecule>Envelope protein E</molecule>
    <text evidence="7">Binds to host cell surface receptor and mediates fusion between viral and cellular membranes. Envelope protein is synthesized in the endoplasmic reticulum in the form of heterodimer with protein prM. They play a role in virion budding in the ER, and the newly formed immature particle is covered with 60 spikes composed of heterodimer between precursor prM and envelope protein E. The virion is transported to the Golgi apparatus where the low pH causes dissociation of PrM-E heterodimers and formation of E homodimers. prM-E cleavage is inefficient, and many virions are only partially matured. These uncleaved prM would play a role in immune evasion.</text>
</comment>
<comment type="function">
    <molecule>Non-structural protein 1</molecule>
    <text evidence="10">Involved in immune evasion, pathogenesis and viral replication. Once cleaved off the polyprotein, is targeted to three destinations: the viral replication cycle, the plasma membrane and the extracellular compartment. Essential for viral replication. Required for formation of the replication complex and recruitment of other non-structural proteins to the ER-derived membrane structures. Excreted as a hexameric lipoparticle that plays a role against host immune response. Antagonizing the complement function. Binds to the host macrophages and dendritic cells. Inhibits signal transduction originating from Toll-like receptor 3 (TLR3).</text>
</comment>
<comment type="function">
    <molecule>Non-structural protein 2A</molecule>
    <text evidence="4">Component of the viral RNA replication complex that functions in virion assembly and antagonizes the host alpha/beta interferon antiviral response.</text>
</comment>
<comment type="function">
    <molecule>Serine protease subunit NS2B</molecule>
    <text evidence="7 15">Required cofactor for the serine protease function of NS3. May have membrane-destabilizing activity and form viroporins (By similarity).</text>
</comment>
<comment type="function">
    <molecule>Serine protease NS3</molecule>
    <text evidence="16">Displays three enzymatic activities: serine protease, NTPase and RNA helicase. NS3 serine protease, in association with NS2B, performs its autocleavage and cleaves the polyprotein at dibasic sites in the cytoplasm: C-prM, NS2A-NS2B, NS2B-NS3, NS3-NS4A, NS4A-2K and NS4B-NS5. NS3 RNA helicase binds RNA and unwinds dsRNA in the 3' to 5' direction.</text>
</comment>
<comment type="function">
    <molecule>Non-structural protein 4A</molecule>
    <text evidence="10">Regulates the ATPase activity of the NS3 helicase activity. NS4A allows NS3 helicase to conserve energy during unwinding.</text>
</comment>
<comment type="function">
    <molecule>Peptide 2k</molecule>
    <text evidence="7">Functions as a signal peptide for NS4B and is required for the interferon antagonism activity of the latter.</text>
</comment>
<comment type="function">
    <molecule>Non-structural protein 4B</molecule>
    <text evidence="10">Induces the formation of ER-derived membrane vesicles where the viral replication takes place. Inhibits interferon (IFN)-induced host STAT1 phosphorylation and nuclear translocation, thereby preventing the establishment of cellular antiviral state by blocking the IFN-alpha/beta pathway. Inhibits STAT2 translocation in the nucleus after IFN-alpha treatment.</text>
</comment>
<comment type="function">
    <molecule>RNA-directed RNA polymerase NS5</molecule>
    <text evidence="10">Replicates the viral (+) and (-) RNA genome, and performs the capping of genomes in the cytoplasm. NS5 methylates viral RNA cap at guanine N-7 and ribose 2'-O positions. Besides its role in RNA genome replication, also prevents the establishment of cellular antiviral state by blocking the interferon-alpha/beta (IFN-alpha/beta) signaling pathway. Inhibits host TYK2 and STAT2 phosphorylation, thereby preventing activation of JAK-STAT signaling pathway.</text>
</comment>
<comment type="catalytic activity">
    <reaction>
        <text>Selective hydrolysis of -Xaa-Xaa-|-Yaa- bonds in which each of the Xaa can be either Arg or Lys and Yaa can be either Ser or Ala.</text>
        <dbReference type="EC" id="3.4.21.91"/>
    </reaction>
</comment>
<comment type="catalytic activity">
    <reaction evidence="12">
        <text>RNA(n) + a ribonucleoside 5'-triphosphate = RNA(n+1) + diphosphate</text>
        <dbReference type="Rhea" id="RHEA:21248"/>
        <dbReference type="Rhea" id="RHEA-COMP:14527"/>
        <dbReference type="Rhea" id="RHEA-COMP:17342"/>
        <dbReference type="ChEBI" id="CHEBI:33019"/>
        <dbReference type="ChEBI" id="CHEBI:61557"/>
        <dbReference type="ChEBI" id="CHEBI:140395"/>
        <dbReference type="EC" id="2.7.7.48"/>
    </reaction>
</comment>
<comment type="catalytic activity">
    <reaction>
        <text>a ribonucleoside 5'-triphosphate + H2O = a ribonucleoside 5'-diphosphate + phosphate + H(+)</text>
        <dbReference type="Rhea" id="RHEA:23680"/>
        <dbReference type="ChEBI" id="CHEBI:15377"/>
        <dbReference type="ChEBI" id="CHEBI:15378"/>
        <dbReference type="ChEBI" id="CHEBI:43474"/>
        <dbReference type="ChEBI" id="CHEBI:57930"/>
        <dbReference type="ChEBI" id="CHEBI:61557"/>
        <dbReference type="EC" id="3.6.1.15"/>
    </reaction>
</comment>
<comment type="catalytic activity">
    <reaction evidence="10">
        <text>ATP + H2O = ADP + phosphate + H(+)</text>
        <dbReference type="Rhea" id="RHEA:13065"/>
        <dbReference type="ChEBI" id="CHEBI:15377"/>
        <dbReference type="ChEBI" id="CHEBI:15378"/>
        <dbReference type="ChEBI" id="CHEBI:30616"/>
        <dbReference type="ChEBI" id="CHEBI:43474"/>
        <dbReference type="ChEBI" id="CHEBI:456216"/>
        <dbReference type="EC" id="3.6.4.13"/>
    </reaction>
</comment>
<comment type="catalytic activity">
    <reaction evidence="17">
        <text>a 5'-end (5'-triphosphoguanosine)-ribonucleoside in mRNA + S-adenosyl-L-methionine = a 5'-end (N(7)-methyl 5'-triphosphoguanosine)-ribonucleoside in mRNA + S-adenosyl-L-homocysteine</text>
        <dbReference type="Rhea" id="RHEA:67008"/>
        <dbReference type="Rhea" id="RHEA-COMP:17166"/>
        <dbReference type="Rhea" id="RHEA-COMP:17167"/>
        <dbReference type="ChEBI" id="CHEBI:57856"/>
        <dbReference type="ChEBI" id="CHEBI:59789"/>
        <dbReference type="ChEBI" id="CHEBI:156461"/>
        <dbReference type="ChEBI" id="CHEBI:167617"/>
        <dbReference type="EC" id="2.1.1.56"/>
    </reaction>
</comment>
<comment type="catalytic activity">
    <reaction evidence="17">
        <text>a 5'-end (N(7)-methyl 5'-triphosphoguanosine)-ribonucleoside in mRNA + S-adenosyl-L-methionine = a 5'-end (N(7)-methyl 5'-triphosphoguanosine)-(2'-O-methyl-ribonucleoside) in mRNA + S-adenosyl-L-homocysteine + H(+)</text>
        <dbReference type="Rhea" id="RHEA:67020"/>
        <dbReference type="Rhea" id="RHEA-COMP:17167"/>
        <dbReference type="Rhea" id="RHEA-COMP:17168"/>
        <dbReference type="ChEBI" id="CHEBI:15378"/>
        <dbReference type="ChEBI" id="CHEBI:57856"/>
        <dbReference type="ChEBI" id="CHEBI:59789"/>
        <dbReference type="ChEBI" id="CHEBI:156461"/>
        <dbReference type="ChEBI" id="CHEBI:167609"/>
        <dbReference type="EC" id="2.1.1.57"/>
    </reaction>
</comment>
<comment type="subunit">
    <molecule>Capsid protein C</molecule>
    <text evidence="7">Homodimer (By similarity). Interacts (via N-terminus) with host EXOC1 (via C-terminus); this interaction results in EXOC1 degradation through the proteasome degradation pathway (By similarity).</text>
</comment>
<comment type="subunit">
    <molecule>Protein prM</molecule>
    <text evidence="7">Forms heterodimers with envelope protein E in the endoplasmic reticulum and Golgi.</text>
</comment>
<comment type="subunit">
    <molecule>Envelope protein E</molecule>
    <text evidence="7">Homodimer; in the endoplasmic reticulum and Golgi (By similarity). Interacts with protein prM (By similarity). Interacts with non-structural protein 1 (By similarity).</text>
</comment>
<comment type="subunit">
    <molecule>Non-structural protein 1</molecule>
    <text evidence="10">Homodimer; Homohexamer when secreted (By similarity). Interacts with envelope protein E (By similarity). NS1 interacts with NS4B (By similarity). Interacts with host complement protein CFH; this interaction leads to the degradation of C3 (By similarity).</text>
</comment>
<comment type="subunit">
    <molecule>Non-structural protein 2A</molecule>
    <text evidence="2">Interacts (via N-terminus) with serine protease NS3.</text>
</comment>
<comment type="subunit">
    <molecule>Serine protease subunit NS2B</molecule>
    <text evidence="7">Forms a heterodimer with serine protease NS3 (By similarity). May form homooligomers (By similarity).</text>
</comment>
<comment type="subunit">
    <molecule>Serine protease NS3</molecule>
    <text evidence="7">Forms a heterodimer with NS2B (By similarity). Interacts with non-structural protein 2A (via N-terminus) (By similarity). Interacts with NS4B (By similarity). Interacts with unphosphorylated RNA-directed RNA polymerase NS5; this interaction stimulates RNA-directed RNA polymerase NS5 guanylyltransferase activity (By similarity).</text>
</comment>
<comment type="subunit">
    <molecule>Non-structural protein 4B</molecule>
    <text evidence="7">Interacts with serine protease NS3 (By similarity).</text>
</comment>
<comment type="subunit">
    <molecule>RNA-directed RNA polymerase NS5</molecule>
    <text evidence="7">Homodimer. Interacts with host STAT2; this interaction inhibits the phosphorylation of the latter, and, when all viral proteins are present (polyprotein), targets STAT2 for degradation. Interacts with serine protease NS3.</text>
</comment>
<comment type="subcellular location">
    <molecule>Capsid protein C</molecule>
    <subcellularLocation>
        <location evidence="7">Virion</location>
    </subcellularLocation>
    <subcellularLocation>
        <location evidence="7">Host nucleus</location>
    </subcellularLocation>
    <subcellularLocation>
        <location evidence="3">Host cytoplasm</location>
    </subcellularLocation>
    <subcellularLocation>
        <location evidence="3">Host cytoplasm</location>
        <location evidence="3">Host perinuclear region</location>
    </subcellularLocation>
</comment>
<comment type="subcellular location">
    <molecule>Peptide pr</molecule>
    <subcellularLocation>
        <location evidence="7">Secreted</location>
    </subcellularLocation>
</comment>
<comment type="subcellular location">
    <molecule>Small envelope protein M</molecule>
    <subcellularLocation>
        <location evidence="2">Virion membrane</location>
        <topology evidence="2">Multi-pass membrane protein</topology>
    </subcellularLocation>
    <subcellularLocation>
        <location evidence="2">Host endoplasmic reticulum membrane</location>
        <topology evidence="11">Multi-pass membrane protein</topology>
    </subcellularLocation>
    <text evidence="2">ER membrane retention is mediated by the transmembrane domains.</text>
</comment>
<comment type="subcellular location">
    <molecule>Envelope protein E</molecule>
    <subcellularLocation>
        <location evidence="19">Virion membrane</location>
        <topology evidence="2">Multi-pass membrane protein</topology>
    </subcellularLocation>
    <subcellularLocation>
        <location evidence="2">Host endoplasmic reticulum membrane</location>
        <topology evidence="11">Multi-pass membrane protein</topology>
    </subcellularLocation>
    <text evidence="2">ER membrane retention is mediated by the transmembrane domains.</text>
</comment>
<comment type="subcellular location">
    <molecule>Non-structural protein 1</molecule>
    <subcellularLocation>
        <location evidence="7">Secreted</location>
    </subcellularLocation>
    <subcellularLocation>
        <location>Host endoplasmic reticulum membrane</location>
        <topology>Peripheral membrane protein</topology>
        <orientation evidence="7">Lumenal side</orientation>
    </subcellularLocation>
    <text evidence="10">Located in RE-derived vesicles hosting the replication complex.</text>
</comment>
<comment type="subcellular location">
    <molecule>Non-structural protein 2A</molecule>
    <subcellularLocation>
        <location evidence="4">Host endoplasmic reticulum membrane</location>
        <topology evidence="7">Multi-pass membrane protein</topology>
    </subcellularLocation>
</comment>
<comment type="subcellular location">
    <molecule>Serine protease subunit NS2B</molecule>
    <subcellularLocation>
        <location>Host endoplasmic reticulum membrane</location>
        <topology evidence="7">Multi-pass membrane protein</topology>
    </subcellularLocation>
</comment>
<comment type="subcellular location">
    <molecule>Serine protease NS3</molecule>
    <subcellularLocation>
        <location evidence="16">Host endoplasmic reticulum membrane</location>
        <topology evidence="16">Peripheral membrane protein</topology>
        <orientation evidence="16">Cytoplasmic side</orientation>
    </subcellularLocation>
    <text evidence="16">Remains non-covalently associated to serine protease subunit NS2B.</text>
</comment>
<comment type="subcellular location">
    <molecule>Non-structural protein 4A</molecule>
    <subcellularLocation>
        <location evidence="4">Host endoplasmic reticulum membrane</location>
        <topology evidence="7">Multi-pass membrane protein</topology>
    </subcellularLocation>
    <text evidence="7">Located in RE-associated vesicles hosting the replication complex.</text>
</comment>
<comment type="subcellular location">
    <molecule>Non-structural protein 4B</molecule>
    <subcellularLocation>
        <location evidence="7">Host endoplasmic reticulum membrane</location>
        <topology evidence="7">Multi-pass membrane protein</topology>
    </subcellularLocation>
    <text evidence="10">Located in RE-derived vesicles hosting the replication complex.</text>
</comment>
<comment type="subcellular location">
    <molecule>RNA-directed RNA polymerase NS5</molecule>
    <subcellularLocation>
        <location>Host endoplasmic reticulum membrane</location>
        <topology>Peripheral membrane protein</topology>
        <orientation>Cytoplasmic side</orientation>
    </subcellularLocation>
    <subcellularLocation>
        <location evidence="3">Host nucleus</location>
    </subcellularLocation>
    <text evidence="7">Located in RE-associated vesicles hosting the replication complex. NS5 protein is mainly localized in the nucleus rather than in ER vesicles.</text>
</comment>
<comment type="domain">
    <text evidence="7">The transmembrane domains of the small envelope protein M and envelope protein E contain an endoplasmic reticulum retention signal.</text>
</comment>
<comment type="PTM">
    <molecule>Genome polyprotein</molecule>
    <text evidence="7">Specific enzymatic cleavages in vivo yield mature proteins. Cleavages in the lumen of endoplasmic reticulum are performed by host signal peptidase, whereas cleavages in the cytoplasmic side are performed by serine protease NS3. Signal cleavage at the 2K-4B site requires a prior NS3 protease-mediated cleavage at the 4A-2K site.</text>
</comment>
<comment type="PTM">
    <molecule>Protein prM</molecule>
    <text evidence="7">Cleaved in post-Golgi vesicles by a host furin, releasing the mature small envelope protein M, and peptide pr. This cleavage is incomplete as up to 30% of viral particles still carry uncleaved prM.</text>
</comment>
<comment type="PTM">
    <molecule>Envelope protein E</molecule>
    <text evidence="7">N-glycosylated.</text>
</comment>
<comment type="PTM">
    <molecule>Non-structural protein 1</molecule>
    <text evidence="7">N-glycosylated. The excreted form is glycosylated and this is required for efficient secretion of the protein from infected cells.</text>
</comment>
<comment type="PTM">
    <molecule>RNA-directed RNA polymerase NS5</molecule>
    <text evidence="7">Phosphorylated on serines residues. This phosphorylation may trigger NS5 nuclear localization.</text>
</comment>
<comment type="similarity">
    <text evidence="17">In the N-terminal section; belongs to the class I-like SAM-binding methyltransferase superfamily. mRNA cap 0-1 NS5-type methyltransferase family.</text>
</comment>
<name>POLG_STEVM</name>
<organismHost>
    <name type="scientific">Agelaius tricolor</name>
    <name type="common">Tricolored blackbird</name>
    <dbReference type="NCBI Taxonomy" id="9191"/>
</organismHost>
<organismHost>
    <name type="scientific">Cardinalis cardinalis</name>
    <name type="common">Northern cardinal</name>
    <dbReference type="NCBI Taxonomy" id="98964"/>
</organismHost>
<organismHost>
    <name type="scientific">Columba livia</name>
    <name type="common">Rock dove</name>
    <dbReference type="NCBI Taxonomy" id="8932"/>
</organismHost>
<organismHost>
    <name type="scientific">Culex nigripalpus</name>
    <dbReference type="NCBI Taxonomy" id="42429"/>
</organismHost>
<organismHost>
    <name type="scientific">Culex pipiens</name>
    <name type="common">House mosquito</name>
    <dbReference type="NCBI Taxonomy" id="7175"/>
</organismHost>
<organismHost>
    <name type="scientific">Culex quinquefasciatus</name>
    <name type="common">Southern house mosquito</name>
    <name type="synonym">Culex pungens</name>
    <dbReference type="NCBI Taxonomy" id="7176"/>
</organismHost>
<organismHost>
    <name type="scientific">Culex tarsalis</name>
    <name type="common">Encephalitis mosquito</name>
    <dbReference type="NCBI Taxonomy" id="7177"/>
</organismHost>
<organismHost>
    <name type="scientific">Cyanocitta cristata</name>
    <name type="common">Blue jay</name>
    <dbReference type="NCBI Taxonomy" id="28727"/>
</organismHost>
<organismHost>
    <name type="scientific">Euphagus cyanocephalus</name>
    <name type="common">Brewer's blackbird</name>
    <dbReference type="NCBI Taxonomy" id="84817"/>
</organismHost>
<organismHost>
    <name type="scientific">Haemorhous mexicanus</name>
    <name type="common">House finch</name>
    <name type="synonym">Carpodacus mexicanus</name>
    <dbReference type="NCBI Taxonomy" id="30427"/>
</organismHost>
<organismHost>
    <name type="scientific">Homo sapiens</name>
    <name type="common">Human</name>
    <dbReference type="NCBI Taxonomy" id="9606"/>
</organismHost>
<organismHost>
    <name type="scientific">Mimus polyglottos</name>
    <name type="common">Northern mockingbird</name>
    <name type="synonym">Turdus polyglottos</name>
    <dbReference type="NCBI Taxonomy" id="60713"/>
</organismHost>
<organismHost>
    <name type="scientific">Passer domesticus</name>
    <name type="common">House sparrow</name>
    <name type="synonym">Fringilla domestica</name>
    <dbReference type="NCBI Taxonomy" id="48849"/>
</organismHost>
<organismHost>
    <name type="scientific">Turdus migratorius</name>
    <name type="common">American robin</name>
    <dbReference type="NCBI Taxonomy" id="9188"/>
</organismHost>
<organismHost>
    <name type="scientific">Zenaida macroura</name>
    <name type="common">Mourning dove</name>
    <name type="synonym">Columba macroura</name>
    <dbReference type="NCBI Taxonomy" id="47245"/>
</organismHost>
<organism>
    <name type="scientific">St. louis encephalitis virus (strain MS1-7)</name>
    <dbReference type="NCBI Taxonomy" id="11081"/>
    <lineage>
        <taxon>Viruses</taxon>
        <taxon>Riboviria</taxon>
        <taxon>Orthornavirae</taxon>
        <taxon>Kitrinoviricota</taxon>
        <taxon>Flasuviricetes</taxon>
        <taxon>Amarillovirales</taxon>
        <taxon>Flaviviridae</taxon>
        <taxon>Orthoflavivirus</taxon>
        <taxon>Orthoflavivirus louisense</taxon>
        <taxon>St. Louis encephalitis virus</taxon>
    </lineage>
</organism>
<feature type="chain" id="PRO_0000405143" description="Genome polyprotein">
    <location>
        <begin position="1"/>
        <end position="3412" status="greater than"/>
    </location>
</feature>
<feature type="chain" id="PRO_0000037735" description="Capsid protein C" evidence="3">
    <location>
        <begin position="1"/>
        <end position="103"/>
    </location>
</feature>
<feature type="propeptide" id="PRO_0000405144" description="ER anchor for the capsid protein C, removed in mature form by serine protease NS3" evidence="3">
    <location>
        <begin position="104"/>
        <end position="121"/>
    </location>
</feature>
<feature type="chain" id="PRO_0000405145" description="Protein prM" evidence="3">
    <location>
        <begin position="122"/>
        <end position="288"/>
    </location>
</feature>
<feature type="chain" id="PRO_0000037736" description="Peptide pr" evidence="3">
    <location>
        <begin position="122"/>
        <end position="213"/>
    </location>
</feature>
<feature type="chain" id="PRO_0000037737" description="Small envelope protein M" evidence="3">
    <location>
        <begin position="214"/>
        <end position="288"/>
    </location>
</feature>
<feature type="chain" id="PRO_0000037738" description="Envelope protein E" evidence="3">
    <location>
        <begin position="289"/>
        <end position="789"/>
    </location>
</feature>
<feature type="chain" id="PRO_0000037739" description="Non-structural protein 1" evidence="3">
    <location>
        <begin position="790"/>
        <end position="1141"/>
    </location>
</feature>
<feature type="chain" id="PRO_0000037740" description="Non-structural protein 2A" evidence="3">
    <location>
        <begin position="1142"/>
        <end position="1368"/>
    </location>
</feature>
<feature type="chain" id="PRO_0000037741" description="Serine protease subunit NS2B" evidence="3">
    <location>
        <begin position="1369"/>
        <end position="1499"/>
    </location>
</feature>
<feature type="chain" id="PRO_0000037742" description="Serine protease NS3" evidence="3">
    <location>
        <begin position="1500"/>
        <end position="2117"/>
    </location>
</feature>
<feature type="chain" id="PRO_0000405146" description="Non-structural protein 4A" evidence="1">
    <location>
        <begin position="2118"/>
        <end position="2243"/>
    </location>
</feature>
<feature type="peptide" id="PRO_0000405147" description="Peptide 2k" evidence="3">
    <location>
        <begin position="2244"/>
        <end position="2266"/>
    </location>
</feature>
<feature type="chain" id="PRO_0000405148" description="Non-structural protein 4B" evidence="1">
    <location>
        <begin position="2267"/>
        <end position="2524"/>
    </location>
</feature>
<feature type="chain" id="PRO_0000405149" description="RNA-directed RNA polymerase NS5" evidence="1">
    <location>
        <begin position="2525"/>
        <end position="3412" status="greater than"/>
    </location>
</feature>
<feature type="topological domain" description="Cytoplasmic" evidence="11">
    <location>
        <begin position="2"/>
        <end position="108"/>
    </location>
</feature>
<feature type="transmembrane region" description="Helical" evidence="11">
    <location>
        <begin position="109"/>
        <end position="129"/>
    </location>
</feature>
<feature type="topological domain" description="Extracellular" evidence="11">
    <location>
        <begin position="130"/>
        <end position="247"/>
    </location>
</feature>
<feature type="transmembrane region" description="Helical" evidence="11">
    <location>
        <begin position="248"/>
        <end position="268"/>
    </location>
</feature>
<feature type="topological domain" description="Cytoplasmic" evidence="11">
    <location>
        <begin position="269"/>
        <end position="273"/>
    </location>
</feature>
<feature type="transmembrane region" description="Helical" evidence="19">
    <location>
        <begin position="274"/>
        <end position="288"/>
    </location>
</feature>
<feature type="topological domain" description="Extracellular" evidence="11">
    <location>
        <begin position="289"/>
        <end position="741"/>
    </location>
</feature>
<feature type="transmembrane region" description="Helical" evidence="11">
    <location>
        <begin position="742"/>
        <end position="762"/>
    </location>
</feature>
<feature type="topological domain" description="Cytoplasmic" evidence="11">
    <location>
        <begin position="763"/>
        <end position="768"/>
    </location>
</feature>
<feature type="transmembrane region" description="Helical" evidence="11">
    <location>
        <begin position="769"/>
        <end position="789"/>
    </location>
</feature>
<feature type="topological domain" description="Extracellular" evidence="11">
    <location>
        <begin position="790"/>
        <end position="1214"/>
    </location>
</feature>
<feature type="transmembrane region" description="Helical" evidence="11">
    <location>
        <begin position="1215"/>
        <end position="1235"/>
    </location>
</feature>
<feature type="topological domain" description="Cytoplasmic" evidence="11">
    <location>
        <begin position="1236"/>
        <end position="1245"/>
    </location>
</feature>
<feature type="transmembrane region" description="Helical" evidence="11">
    <location>
        <begin position="1246"/>
        <end position="1266"/>
    </location>
</feature>
<feature type="topological domain" description="Lumenal" evidence="11">
    <location>
        <begin position="1267"/>
        <end position="1288"/>
    </location>
</feature>
<feature type="transmembrane region" description="Helical" evidence="11">
    <location>
        <begin position="1289"/>
        <end position="1303"/>
    </location>
</feature>
<feature type="topological domain" description="Cytoplasmic" evidence="11">
    <location>
        <position position="1304"/>
    </location>
</feature>
<feature type="transmembrane region" description="Helical" evidence="11">
    <location>
        <begin position="1305"/>
        <end position="1325"/>
    </location>
</feature>
<feature type="topological domain" description="Lumenal" evidence="11">
    <location>
        <begin position="1326"/>
        <end position="1339"/>
    </location>
</feature>
<feature type="transmembrane region" description="Helical" evidence="11">
    <location>
        <begin position="1340"/>
        <end position="1360"/>
    </location>
</feature>
<feature type="topological domain" description="Cytoplasmic" evidence="11">
    <location>
        <begin position="1361"/>
        <end position="1369"/>
    </location>
</feature>
<feature type="transmembrane region" description="Helical" evidence="11">
    <location>
        <begin position="1370"/>
        <end position="1390"/>
    </location>
</feature>
<feature type="topological domain" description="Lumenal" evidence="11">
    <location>
        <begin position="1391"/>
        <end position="1393"/>
    </location>
</feature>
<feature type="transmembrane region" description="Helical" evidence="11">
    <location>
        <begin position="1394"/>
        <end position="1414"/>
    </location>
</feature>
<feature type="topological domain" description="Cytoplasmic" evidence="11">
    <location>
        <begin position="1415"/>
        <end position="1471"/>
    </location>
</feature>
<feature type="intramembrane region" description="Helical" evidence="11">
    <location>
        <begin position="1472"/>
        <end position="1492"/>
    </location>
</feature>
<feature type="topological domain" description="Cytoplasmic" evidence="11">
    <location>
        <begin position="1493"/>
        <end position="2167"/>
    </location>
</feature>
<feature type="transmembrane region" description="Helical" evidence="11">
    <location>
        <begin position="2168"/>
        <end position="2188"/>
    </location>
</feature>
<feature type="topological domain" description="Lumenal" evidence="11">
    <location>
        <begin position="2189"/>
        <end position="2193"/>
    </location>
</feature>
<feature type="intramembrane region" description="Helical" evidence="11">
    <location>
        <begin position="2194"/>
        <end position="2214"/>
    </location>
</feature>
<feature type="topological domain" description="Lumenal" evidence="11">
    <location>
        <position position="2215"/>
    </location>
</feature>
<feature type="transmembrane region" description="Helical" evidence="11">
    <location>
        <begin position="2216"/>
        <end position="2236"/>
    </location>
</feature>
<feature type="topological domain" description="Cytoplasmic" evidence="11">
    <location>
        <begin position="2237"/>
        <end position="2251"/>
    </location>
</feature>
<feature type="transmembrane region" description="Helical; Note=Signal for NS4B" evidence="11">
    <location>
        <begin position="2252"/>
        <end position="2266"/>
    </location>
</feature>
<feature type="topological domain" description="Lumenal" evidence="11">
    <location>
        <begin position="2267"/>
        <end position="2308"/>
    </location>
</feature>
<feature type="intramembrane region" description="Helical" evidence="11">
    <location>
        <begin position="2309"/>
        <end position="2329"/>
    </location>
</feature>
<feature type="topological domain" description="Lumenal" evidence="11">
    <location>
        <begin position="2330"/>
        <end position="2376"/>
    </location>
</feature>
<feature type="transmembrane region" description="Helical" evidence="11">
    <location>
        <begin position="2377"/>
        <end position="2397"/>
    </location>
</feature>
<feature type="topological domain" description="Cytoplasmic" evidence="11">
    <location>
        <begin position="2398"/>
        <end position="2440"/>
    </location>
</feature>
<feature type="transmembrane region" description="Helical" evidence="11">
    <location>
        <begin position="2441"/>
        <end position="2461"/>
    </location>
</feature>
<feature type="topological domain" description="Lumenal" evidence="11">
    <location>
        <begin position="2462"/>
        <end position="2466"/>
    </location>
</feature>
<feature type="transmembrane region" description="Helical" evidence="11">
    <location>
        <begin position="2467"/>
        <end position="2487"/>
    </location>
</feature>
<feature type="topological domain" description="Cytoplasmic" evidence="11">
    <location>
        <begin position="2488"/>
        <end position="3412" status="greater than"/>
    </location>
</feature>
<feature type="domain" description="Peptidase S7" evidence="16">
    <location>
        <begin position="1500"/>
        <end position="1677"/>
    </location>
</feature>
<feature type="domain" description="Helicase ATP-binding" evidence="13">
    <location>
        <begin position="1680"/>
        <end position="1836"/>
    </location>
</feature>
<feature type="domain" description="Helicase C-terminal" evidence="14">
    <location>
        <begin position="1847"/>
        <end position="2011"/>
    </location>
</feature>
<feature type="domain" description="mRNA cap 0-1 NS5-type MT" evidence="17">
    <location>
        <begin position="2525"/>
        <end position="2790"/>
    </location>
</feature>
<feature type="domain" description="RdRp catalytic" evidence="12">
    <location>
        <begin position="3054"/>
        <end position="3206"/>
    </location>
</feature>
<feature type="region of interest" description="Interaction with host EXOC1" evidence="3">
    <location>
        <begin position="2"/>
        <end position="15"/>
    </location>
</feature>
<feature type="region of interest" description="Hydrophobic; homodimerization of capsid protein C" evidence="8">
    <location>
        <begin position="37"/>
        <end position="72"/>
    </location>
</feature>
<feature type="region of interest" description="Fusion peptide" evidence="5">
    <location>
        <begin position="386"/>
        <end position="399"/>
    </location>
</feature>
<feature type="region of interest" description="Interacts with and activates NS3 protease" evidence="15">
    <location>
        <begin position="1422"/>
        <end position="1461"/>
    </location>
</feature>
<feature type="region of interest" description="Important for RNA-binding" evidence="6">
    <location>
        <begin position="1684"/>
        <end position="1687"/>
    </location>
</feature>
<feature type="region of interest" description="Regulates the ATPase activity of NS3 helicase" evidence="10">
    <location>
        <begin position="2162"/>
        <end position="2166"/>
    </location>
</feature>
<feature type="region of interest" description="Disordered" evidence="18">
    <location>
        <begin position="2771"/>
        <end position="2791"/>
    </location>
</feature>
<feature type="short sequence motif" description="DEAH box" evidence="13">
    <location>
        <begin position="1784"/>
        <end position="1787"/>
    </location>
</feature>
<feature type="compositionally biased region" description="Basic and acidic residues" evidence="18">
    <location>
        <begin position="2771"/>
        <end position="2780"/>
    </location>
</feature>
<feature type="active site" description="Charge relay system; for serine protease NS3 activity" evidence="16">
    <location>
        <position position="1550"/>
    </location>
</feature>
<feature type="active site" description="Charge relay system; for serine protease NS3 activity" evidence="16">
    <location>
        <position position="1574"/>
    </location>
</feature>
<feature type="active site" description="Charge relay system; for serine protease NS3 activity" evidence="16">
    <location>
        <position position="1634"/>
    </location>
</feature>
<feature type="active site" description="For 2'-O-MTase activity" evidence="9">
    <location>
        <position position="2585"/>
    </location>
</feature>
<feature type="active site" description="For 2'-O-MTase activity" evidence="9">
    <location>
        <position position="2670"/>
    </location>
</feature>
<feature type="active site" description="For 2'-O-MTase activity" evidence="9">
    <location>
        <position position="2706"/>
    </location>
</feature>
<feature type="active site" description="For 2'-O-MTase activity" evidence="9">
    <location>
        <position position="2742"/>
    </location>
</feature>
<feature type="binding site" evidence="13">
    <location>
        <begin position="1693"/>
        <end position="1700"/>
    </location>
    <ligand>
        <name>ATP</name>
        <dbReference type="ChEBI" id="CHEBI:30616"/>
    </ligand>
</feature>
<feature type="binding site" evidence="17">
    <location>
        <position position="2580"/>
    </location>
    <ligand>
        <name>S-adenosyl-L-methionine</name>
        <dbReference type="ChEBI" id="CHEBI:59789"/>
    </ligand>
</feature>
<feature type="binding site" evidence="17">
    <location>
        <position position="2610"/>
    </location>
    <ligand>
        <name>S-adenosyl-L-methionine</name>
        <dbReference type="ChEBI" id="CHEBI:59789"/>
    </ligand>
</feature>
<feature type="binding site" evidence="17">
    <location>
        <position position="2611"/>
    </location>
    <ligand>
        <name>S-adenosyl-L-methionine</name>
        <dbReference type="ChEBI" id="CHEBI:59789"/>
    </ligand>
</feature>
<feature type="binding site" evidence="17">
    <location>
        <position position="2628"/>
    </location>
    <ligand>
        <name>S-adenosyl-L-methionine</name>
        <dbReference type="ChEBI" id="CHEBI:59789"/>
    </ligand>
</feature>
<feature type="binding site" evidence="17">
    <location>
        <position position="2629"/>
    </location>
    <ligand>
        <name>S-adenosyl-L-methionine</name>
        <dbReference type="ChEBI" id="CHEBI:59789"/>
    </ligand>
</feature>
<feature type="binding site" evidence="17">
    <location>
        <position position="2655"/>
    </location>
    <ligand>
        <name>S-adenosyl-L-methionine</name>
        <dbReference type="ChEBI" id="CHEBI:59789"/>
    </ligand>
</feature>
<feature type="binding site" evidence="17">
    <location>
        <position position="2656"/>
    </location>
    <ligand>
        <name>S-adenosyl-L-methionine</name>
        <dbReference type="ChEBI" id="CHEBI:59789"/>
    </ligand>
</feature>
<feature type="binding site" evidence="17">
    <location>
        <position position="2671"/>
    </location>
    <ligand>
        <name>S-adenosyl-L-methionine</name>
        <dbReference type="ChEBI" id="CHEBI:59789"/>
    </ligand>
</feature>
<feature type="binding site" evidence="17">
    <location>
        <position position="2744"/>
    </location>
    <ligand>
        <name>S-adenosyl-L-methionine</name>
        <dbReference type="ChEBI" id="CHEBI:59789"/>
    </ligand>
</feature>
<feature type="binding site" evidence="4">
    <location>
        <position position="2964"/>
    </location>
    <ligand>
        <name>Zn(2+)</name>
        <dbReference type="ChEBI" id="CHEBI:29105"/>
        <label>1</label>
    </ligand>
</feature>
<feature type="binding site" evidence="4">
    <location>
        <position position="2968"/>
    </location>
    <ligand>
        <name>Zn(2+)</name>
        <dbReference type="ChEBI" id="CHEBI:29105"/>
        <label>1</label>
    </ligand>
</feature>
<feature type="binding site" evidence="4">
    <location>
        <position position="2973"/>
    </location>
    <ligand>
        <name>Zn(2+)</name>
        <dbReference type="ChEBI" id="CHEBI:29105"/>
        <label>1</label>
    </ligand>
</feature>
<feature type="binding site" evidence="4">
    <location>
        <position position="2976"/>
    </location>
    <ligand>
        <name>Zn(2+)</name>
        <dbReference type="ChEBI" id="CHEBI:29105"/>
        <label>1</label>
    </ligand>
</feature>
<feature type="binding site" evidence="4">
    <location>
        <position position="3241"/>
    </location>
    <ligand>
        <name>Zn(2+)</name>
        <dbReference type="ChEBI" id="CHEBI:29105"/>
        <label>2</label>
    </ligand>
</feature>
<feature type="binding site" evidence="4">
    <location>
        <position position="3257"/>
    </location>
    <ligand>
        <name>Zn(2+)</name>
        <dbReference type="ChEBI" id="CHEBI:29105"/>
        <label>2</label>
    </ligand>
</feature>
<feature type="binding site" evidence="4">
    <location>
        <position position="3376"/>
    </location>
    <ligand>
        <name>Zn(2+)</name>
        <dbReference type="ChEBI" id="CHEBI:29105"/>
        <label>2</label>
    </ligand>
</feature>
<feature type="site" description="Cleavage; by viral protease NS3" evidence="3">
    <location>
        <begin position="103"/>
        <end position="104"/>
    </location>
</feature>
<feature type="site" description="Cleavage; by host signal peptidase" evidence="3">
    <location>
        <begin position="121"/>
        <end position="122"/>
    </location>
</feature>
<feature type="site" description="Cleavage; by host furin" evidence="3">
    <location>
        <begin position="213"/>
        <end position="214"/>
    </location>
</feature>
<feature type="site" description="Cleavage; by host signal peptidase" evidence="3">
    <location>
        <begin position="288"/>
        <end position="289"/>
    </location>
</feature>
<feature type="site" description="Cleavage; by host signal peptidase" evidence="3">
    <location>
        <begin position="789"/>
        <end position="790"/>
    </location>
</feature>
<feature type="site" description="Cleavage; by host" evidence="3">
    <location>
        <begin position="1141"/>
        <end position="1142"/>
    </location>
</feature>
<feature type="site" description="Cleavage; by viral protease NS3" evidence="3">
    <location>
        <begin position="1368"/>
        <end position="1369"/>
    </location>
</feature>
<feature type="site" description="Cleavage; by autolysis" evidence="3">
    <location>
        <begin position="1499"/>
        <end position="1500"/>
    </location>
</feature>
<feature type="site" description="Involved in NS3 ATPase and RTPase activities" evidence="4">
    <location>
        <position position="1956"/>
    </location>
</feature>
<feature type="site" description="Involved in NS3 ATPase and RTPase activities" evidence="4">
    <location>
        <position position="1959"/>
    </location>
</feature>
<feature type="site" description="Cleavage; by autolysis" evidence="3">
    <location>
        <begin position="2117"/>
        <end position="2118"/>
    </location>
</feature>
<feature type="site" description="Cleavage; by viral protease NS3" evidence="3">
    <location>
        <begin position="2243"/>
        <end position="2244"/>
    </location>
</feature>
<feature type="site" description="Cleavage; by host signal peptidase" evidence="3">
    <location>
        <begin position="2266"/>
        <end position="2267"/>
    </location>
</feature>
<feature type="site" description="Cleavage; by viral protease NS3" evidence="3">
    <location>
        <begin position="2524"/>
        <end position="2525"/>
    </location>
</feature>
<feature type="site" description="mRNA cap binding" evidence="17">
    <location>
        <position position="2537"/>
    </location>
</feature>
<feature type="site" description="mRNA cap binding; via carbonyl oxygen" evidence="17">
    <location>
        <position position="2540"/>
    </location>
</feature>
<feature type="site" description="mRNA cap binding" evidence="17">
    <location>
        <position position="2541"/>
    </location>
</feature>
<feature type="site" description="mRNA cap binding; via carbonyl oxygen" evidence="17">
    <location>
        <position position="2543"/>
    </location>
</feature>
<feature type="site" description="mRNA cap binding" evidence="17">
    <location>
        <position position="2548"/>
    </location>
</feature>
<feature type="site" description="mRNA cap binding" evidence="17">
    <location>
        <position position="2552"/>
    </location>
</feature>
<feature type="site" description="Essential for 2'-O-methyltransferase activity" evidence="17">
    <location>
        <position position="2585"/>
    </location>
</feature>
<feature type="site" description="Essential for 2'-O-methyltransferase and N-7 methyltransferase activity" evidence="17">
    <location>
        <position position="2670"/>
    </location>
</feature>
<feature type="site" description="mRNA cap binding" evidence="17">
    <location>
        <position position="2674"/>
    </location>
</feature>
<feature type="site" description="Essential for 2'-O-methyltransferase activity" evidence="17">
    <location>
        <position position="2706"/>
    </location>
</feature>
<feature type="site" description="mRNA cap binding" evidence="17">
    <location>
        <position position="2737"/>
    </location>
</feature>
<feature type="site" description="mRNA cap binding" evidence="17">
    <location>
        <position position="2739"/>
    </location>
</feature>
<feature type="site" description="Essential for 2'-O-methyltransferase activity" evidence="17">
    <location>
        <position position="2742"/>
    </location>
</feature>
<feature type="modified residue" description="Phosphoserine" evidence="2">
    <location>
        <position position="2580"/>
    </location>
</feature>
<feature type="glycosylation site" description="N-linked (GlcNAc...) asparagine; by host" evidence="4">
    <location>
        <position position="136"/>
    </location>
</feature>
<feature type="glycosylation site" description="N-linked (GlcNAc...) asparagine; by host" evidence="10">
    <location>
        <position position="919"/>
    </location>
</feature>
<feature type="glycosylation site" description="N-linked (GlcNAc...) asparagine; by host" evidence="10">
    <location>
        <position position="964"/>
    </location>
</feature>
<feature type="glycosylation site" description="N-linked (GlcNAc...) asparagine; by host" evidence="10">
    <location>
        <position position="996"/>
    </location>
</feature>
<feature type="disulfide bond" evidence="3">
    <location>
        <begin position="291"/>
        <end position="318"/>
    </location>
</feature>
<feature type="disulfide bond" evidence="7">
    <location>
        <begin position="348"/>
        <end position="409"/>
    </location>
</feature>
<feature type="disulfide bond" evidence="3">
    <location>
        <begin position="348"/>
        <end position="404"/>
    </location>
</feature>
<feature type="disulfide bond" evidence="3">
    <location>
        <begin position="362"/>
        <end position="393"/>
    </location>
</feature>
<feature type="disulfide bond" evidence="3">
    <location>
        <begin position="380"/>
        <end position="409"/>
    </location>
</feature>
<feature type="disulfide bond" evidence="7">
    <location>
        <begin position="380"/>
        <end position="404"/>
    </location>
</feature>
<feature type="disulfide bond" evidence="3">
    <location>
        <begin position="478"/>
        <end position="576"/>
    </location>
</feature>
<feature type="disulfide bond" evidence="3">
    <location>
        <begin position="593"/>
        <end position="624"/>
    </location>
</feature>
<feature type="disulfide bond" evidence="7">
    <location>
        <begin position="793"/>
        <end position="804"/>
    </location>
</feature>
<feature type="disulfide bond" evidence="7">
    <location>
        <begin position="844"/>
        <end position="932"/>
    </location>
</feature>
<feature type="disulfide bond" evidence="7">
    <location>
        <begin position="968"/>
        <end position="1012"/>
    </location>
</feature>
<feature type="disulfide bond" evidence="7">
    <location>
        <begin position="1069"/>
        <end position="1118"/>
    </location>
</feature>
<feature type="disulfide bond" evidence="7">
    <location>
        <begin position="1080"/>
        <end position="1102"/>
    </location>
</feature>
<feature type="disulfide bond" evidence="10">
    <location>
        <begin position="1080"/>
        <end position="1101"/>
    </location>
</feature>
<feature type="disulfide bond" evidence="7">
    <location>
        <begin position="1101"/>
        <end position="1105"/>
    </location>
</feature>
<feature type="disulfide bond" evidence="10">
    <location>
        <begin position="1102"/>
        <end position="1105"/>
    </location>
</feature>
<feature type="sequence variant">
    <original>I</original>
    <variation>M</variation>
    <location>
        <position position="47"/>
    </location>
</feature>
<feature type="sequence variant">
    <original>V</original>
    <variation>I</variation>
    <location>
        <position position="164"/>
    </location>
</feature>
<feature type="sequence variant">
    <original>N</original>
    <variation>D</variation>
    <location>
        <position position="168"/>
    </location>
</feature>
<feature type="sequence variant">
    <original>VL</original>
    <variation>FC</variation>
    <location>
        <begin position="249"/>
        <end position="250"/>
    </location>
</feature>
<feature type="sequence variant">
    <original>E</original>
    <variation>K</variation>
    <location>
        <position position="346"/>
    </location>
</feature>
<feature type="sequence variant">
    <original>F</original>
    <variation>S</variation>
    <location>
        <position position="444"/>
    </location>
</feature>
<feature type="sequence variant">
    <original>A</original>
    <variation>T</variation>
    <location>
        <position position="604"/>
    </location>
</feature>
<feature type="sequence variant">
    <original>D</original>
    <variation>S</variation>
    <location>
        <position position="796"/>
    </location>
</feature>
<feature type="sequence variant">
    <original>I</original>
    <variation>Y</variation>
    <location>
        <position position="843"/>
    </location>
</feature>
<feature type="sequence variant">
    <original>R</original>
    <variation>Q</variation>
    <location>
        <position position="955"/>
    </location>
</feature>
<feature type="non-terminal residue">
    <location>
        <position position="3412"/>
    </location>
</feature>
<proteinExistence type="evidence at protein level"/>
<protein>
    <recommendedName>
        <fullName>Genome polyprotein</fullName>
    </recommendedName>
    <component>
        <recommendedName>
            <fullName>Capsid protein C</fullName>
        </recommendedName>
        <alternativeName>
            <fullName>Core protein</fullName>
        </alternativeName>
    </component>
    <component>
        <recommendedName>
            <fullName>Protein prM</fullName>
        </recommendedName>
    </component>
    <component>
        <recommendedName>
            <fullName>Peptide pr</fullName>
        </recommendedName>
    </component>
    <component>
        <recommendedName>
            <fullName>Small envelope protein M</fullName>
        </recommendedName>
        <alternativeName>
            <fullName>Matrix protein</fullName>
        </alternativeName>
    </component>
    <component>
        <recommendedName>
            <fullName>Envelope protein E</fullName>
        </recommendedName>
    </component>
    <component>
        <recommendedName>
            <fullName>Non-structural protein 1</fullName>
            <shortName>NS1</shortName>
        </recommendedName>
    </component>
    <component>
        <recommendedName>
            <fullName>Non-structural protein 2A</fullName>
            <shortName>NS2A</shortName>
        </recommendedName>
    </component>
    <component>
        <recommendedName>
            <fullName>Serine protease subunit NS2B</fullName>
        </recommendedName>
        <alternativeName>
            <fullName>Flavivirin protease NS2B regulatory subunit</fullName>
        </alternativeName>
        <alternativeName>
            <fullName>Non-structural protein 2B</fullName>
        </alternativeName>
    </component>
    <component>
        <recommendedName>
            <fullName>Serine protease NS3</fullName>
            <ecNumber>3.4.21.91</ecNumber>
            <ecNumber>3.6.1.15</ecNumber>
            <ecNumber>3.6.4.13</ecNumber>
        </recommendedName>
        <alternativeName>
            <fullName>Flavivirin protease NS3 catalytic subunit</fullName>
        </alternativeName>
        <alternativeName>
            <fullName>Non-structural protein 3</fullName>
        </alternativeName>
    </component>
    <component>
        <recommendedName>
            <fullName>Non-structural protein 4A</fullName>
            <shortName>NS4A</shortName>
        </recommendedName>
    </component>
    <component>
        <recommendedName>
            <fullName>Peptide 2k</fullName>
        </recommendedName>
    </component>
    <component>
        <recommendedName>
            <fullName>Non-structural protein 4B</fullName>
            <shortName>NS4B</shortName>
        </recommendedName>
    </component>
    <component>
        <recommendedName>
            <fullName>RNA-directed RNA polymerase NS5</fullName>
            <ecNumber evidence="17">2.1.1.56</ecNumber>
            <ecNumber evidence="17">2.1.1.57</ecNumber>
            <ecNumber evidence="12">2.7.7.48</ecNumber>
        </recommendedName>
        <alternativeName>
            <fullName>NS5</fullName>
        </alternativeName>
    </component>
</protein>
<evidence type="ECO:0000250" key="1"/>
<evidence type="ECO:0000250" key="2">
    <source>
        <dbReference type="UniProtKB" id="P03314"/>
    </source>
</evidence>
<evidence type="ECO:0000250" key="3">
    <source>
        <dbReference type="UniProtKB" id="P06935"/>
    </source>
</evidence>
<evidence type="ECO:0000250" key="4">
    <source>
        <dbReference type="UniProtKB" id="P14335"/>
    </source>
</evidence>
<evidence type="ECO:0000250" key="5">
    <source>
        <dbReference type="UniProtKB" id="P14336"/>
    </source>
</evidence>
<evidence type="ECO:0000250" key="6">
    <source>
        <dbReference type="UniProtKB" id="P14340"/>
    </source>
</evidence>
<evidence type="ECO:0000250" key="7">
    <source>
        <dbReference type="UniProtKB" id="P17763"/>
    </source>
</evidence>
<evidence type="ECO:0000250" key="8">
    <source>
        <dbReference type="UniProtKB" id="P29990"/>
    </source>
</evidence>
<evidence type="ECO:0000250" key="9">
    <source>
        <dbReference type="UniProtKB" id="Q6YMS4"/>
    </source>
</evidence>
<evidence type="ECO:0000250" key="10">
    <source>
        <dbReference type="UniProtKB" id="Q9Q6P4"/>
    </source>
</evidence>
<evidence type="ECO:0000255" key="11"/>
<evidence type="ECO:0000255" key="12">
    <source>
        <dbReference type="PROSITE-ProRule" id="PRU00539"/>
    </source>
</evidence>
<evidence type="ECO:0000255" key="13">
    <source>
        <dbReference type="PROSITE-ProRule" id="PRU00541"/>
    </source>
</evidence>
<evidence type="ECO:0000255" key="14">
    <source>
        <dbReference type="PROSITE-ProRule" id="PRU00542"/>
    </source>
</evidence>
<evidence type="ECO:0000255" key="15">
    <source>
        <dbReference type="PROSITE-ProRule" id="PRU00859"/>
    </source>
</evidence>
<evidence type="ECO:0000255" key="16">
    <source>
        <dbReference type="PROSITE-ProRule" id="PRU00860"/>
    </source>
</evidence>
<evidence type="ECO:0000255" key="17">
    <source>
        <dbReference type="PROSITE-ProRule" id="PRU00924"/>
    </source>
</evidence>
<evidence type="ECO:0000256" key="18">
    <source>
        <dbReference type="SAM" id="MobiDB-lite"/>
    </source>
</evidence>
<evidence type="ECO:0000305" key="19"/>
<accession>P09732</accession>
<accession>A3EZ58</accession>
<accession>Q88781</accession>
<accession>Q88782</accession>
<accession>Q88783</accession>
<accession>Q88784</accession>
<accession>Q88785</accession>
<accession>Q88786</accession>
<accession>Q88787</accession>
<accession>Q88788</accession>